<evidence type="ECO:0000255" key="1">
    <source>
        <dbReference type="HAMAP-Rule" id="MF_01636"/>
    </source>
</evidence>
<comment type="function">
    <text evidence="1">Catalyzes the decarboxylation of 3-octaprenyl-4-hydroxy benzoate to 2-octaprenylphenol, an intermediate step in ubiquinone biosynthesis.</text>
</comment>
<comment type="catalytic activity">
    <reaction evidence="1">
        <text>a 4-hydroxy-3-(all-trans-polyprenyl)benzoate + H(+) = a 2-(all-trans-polyprenyl)phenol + CO2</text>
        <dbReference type="Rhea" id="RHEA:41680"/>
        <dbReference type="Rhea" id="RHEA-COMP:9514"/>
        <dbReference type="Rhea" id="RHEA-COMP:9516"/>
        <dbReference type="ChEBI" id="CHEBI:1269"/>
        <dbReference type="ChEBI" id="CHEBI:15378"/>
        <dbReference type="ChEBI" id="CHEBI:16526"/>
        <dbReference type="ChEBI" id="CHEBI:78396"/>
        <dbReference type="EC" id="4.1.1.98"/>
    </reaction>
</comment>
<comment type="cofactor">
    <cofactor evidence="1">
        <name>prenylated FMN</name>
        <dbReference type="ChEBI" id="CHEBI:87746"/>
    </cofactor>
    <text evidence="1">Binds 1 prenylated FMN per subunit.</text>
</comment>
<comment type="cofactor">
    <cofactor evidence="1">
        <name>Mn(2+)</name>
        <dbReference type="ChEBI" id="CHEBI:29035"/>
    </cofactor>
</comment>
<comment type="pathway">
    <text evidence="1">Cofactor biosynthesis; ubiquinone biosynthesis.</text>
</comment>
<comment type="subunit">
    <text evidence="1">Homohexamer.</text>
</comment>
<comment type="subcellular location">
    <subcellularLocation>
        <location evidence="1">Cell membrane</location>
        <topology evidence="1">Peripheral membrane protein</topology>
    </subcellularLocation>
</comment>
<comment type="similarity">
    <text evidence="1">Belongs to the UbiD family.</text>
</comment>
<feature type="chain" id="PRO_1000069841" description="3-octaprenyl-4-hydroxybenzoate carboxy-lyase">
    <location>
        <begin position="1"/>
        <end position="489"/>
    </location>
</feature>
<feature type="active site" description="Proton donor" evidence="1">
    <location>
        <position position="287"/>
    </location>
</feature>
<feature type="binding site" evidence="1">
    <location>
        <position position="172"/>
    </location>
    <ligand>
        <name>Mn(2+)</name>
        <dbReference type="ChEBI" id="CHEBI:29035"/>
    </ligand>
</feature>
<feature type="binding site" evidence="1">
    <location>
        <begin position="175"/>
        <end position="177"/>
    </location>
    <ligand>
        <name>prenylated FMN</name>
        <dbReference type="ChEBI" id="CHEBI:87746"/>
    </ligand>
</feature>
<feature type="binding site" evidence="1">
    <location>
        <begin position="189"/>
        <end position="191"/>
    </location>
    <ligand>
        <name>prenylated FMN</name>
        <dbReference type="ChEBI" id="CHEBI:87746"/>
    </ligand>
</feature>
<feature type="binding site" evidence="1">
    <location>
        <begin position="194"/>
        <end position="195"/>
    </location>
    <ligand>
        <name>prenylated FMN</name>
        <dbReference type="ChEBI" id="CHEBI:87746"/>
    </ligand>
</feature>
<feature type="binding site" evidence="1">
    <location>
        <position position="238"/>
    </location>
    <ligand>
        <name>Mn(2+)</name>
        <dbReference type="ChEBI" id="CHEBI:29035"/>
    </ligand>
</feature>
<accession>A0KEH3</accession>
<keyword id="KW-1003">Cell membrane</keyword>
<keyword id="KW-0210">Decarboxylase</keyword>
<keyword id="KW-0285">Flavoprotein</keyword>
<keyword id="KW-0288">FMN</keyword>
<keyword id="KW-0456">Lyase</keyword>
<keyword id="KW-0464">Manganese</keyword>
<keyword id="KW-0472">Membrane</keyword>
<keyword id="KW-0479">Metal-binding</keyword>
<keyword id="KW-1185">Reference proteome</keyword>
<keyword id="KW-0831">Ubiquinone biosynthesis</keyword>
<organism>
    <name type="scientific">Aeromonas hydrophila subsp. hydrophila (strain ATCC 7966 / DSM 30187 / BCRC 13018 / CCUG 14551 / JCM 1027 / KCTC 2358 / NCIMB 9240 / NCTC 8049)</name>
    <dbReference type="NCBI Taxonomy" id="380703"/>
    <lineage>
        <taxon>Bacteria</taxon>
        <taxon>Pseudomonadati</taxon>
        <taxon>Pseudomonadota</taxon>
        <taxon>Gammaproteobacteria</taxon>
        <taxon>Aeromonadales</taxon>
        <taxon>Aeromonadaceae</taxon>
        <taxon>Aeromonas</taxon>
    </lineage>
</organism>
<proteinExistence type="inferred from homology"/>
<dbReference type="EC" id="4.1.1.98" evidence="1"/>
<dbReference type="EMBL" id="CP000462">
    <property type="protein sequence ID" value="ABK39084.1"/>
    <property type="molecule type" value="Genomic_DNA"/>
</dbReference>
<dbReference type="RefSeq" id="WP_011704131.1">
    <property type="nucleotide sequence ID" value="NC_008570.1"/>
</dbReference>
<dbReference type="RefSeq" id="YP_854626.1">
    <property type="nucleotide sequence ID" value="NC_008570.1"/>
</dbReference>
<dbReference type="SMR" id="A0KEH3"/>
<dbReference type="STRING" id="380703.AHA_0101"/>
<dbReference type="EnsemblBacteria" id="ABK39084">
    <property type="protein sequence ID" value="ABK39084"/>
    <property type="gene ID" value="AHA_0101"/>
</dbReference>
<dbReference type="GeneID" id="4489141"/>
<dbReference type="KEGG" id="aha:AHA_0101"/>
<dbReference type="PATRIC" id="fig|380703.7.peg.93"/>
<dbReference type="eggNOG" id="COG0043">
    <property type="taxonomic scope" value="Bacteria"/>
</dbReference>
<dbReference type="HOGENOM" id="CLU_023348_4_1_6"/>
<dbReference type="OrthoDB" id="9809841at2"/>
<dbReference type="UniPathway" id="UPA00232"/>
<dbReference type="Proteomes" id="UP000000756">
    <property type="component" value="Chromosome"/>
</dbReference>
<dbReference type="GO" id="GO:0005829">
    <property type="term" value="C:cytosol"/>
    <property type="evidence" value="ECO:0007669"/>
    <property type="project" value="TreeGrafter"/>
</dbReference>
<dbReference type="GO" id="GO:0005886">
    <property type="term" value="C:plasma membrane"/>
    <property type="evidence" value="ECO:0007669"/>
    <property type="project" value="UniProtKB-SubCell"/>
</dbReference>
<dbReference type="GO" id="GO:0008694">
    <property type="term" value="F:3-octaprenyl-4-hydroxybenzoate carboxy-lyase activity"/>
    <property type="evidence" value="ECO:0007669"/>
    <property type="project" value="UniProtKB-UniRule"/>
</dbReference>
<dbReference type="GO" id="GO:0046872">
    <property type="term" value="F:metal ion binding"/>
    <property type="evidence" value="ECO:0007669"/>
    <property type="project" value="UniProtKB-KW"/>
</dbReference>
<dbReference type="GO" id="GO:0006744">
    <property type="term" value="P:ubiquinone biosynthetic process"/>
    <property type="evidence" value="ECO:0007669"/>
    <property type="project" value="UniProtKB-UniRule"/>
</dbReference>
<dbReference type="FunFam" id="1.20.5.570:FF:000001">
    <property type="entry name" value="3-octaprenyl-4-hydroxybenzoate carboxy-lyase"/>
    <property type="match status" value="1"/>
</dbReference>
<dbReference type="FunFam" id="3.40.1670.10:FF:000001">
    <property type="entry name" value="3-octaprenyl-4-hydroxybenzoate carboxy-lyase"/>
    <property type="match status" value="1"/>
</dbReference>
<dbReference type="Gene3D" id="1.20.5.570">
    <property type="entry name" value="Single helix bin"/>
    <property type="match status" value="1"/>
</dbReference>
<dbReference type="Gene3D" id="3.40.1670.10">
    <property type="entry name" value="UbiD C-terminal domain-like"/>
    <property type="match status" value="1"/>
</dbReference>
<dbReference type="HAMAP" id="MF_01636">
    <property type="entry name" value="UbiD"/>
    <property type="match status" value="1"/>
</dbReference>
<dbReference type="InterPro" id="IPR002830">
    <property type="entry name" value="UbiD"/>
</dbReference>
<dbReference type="InterPro" id="IPR049381">
    <property type="entry name" value="UbiD-like_C"/>
</dbReference>
<dbReference type="InterPro" id="IPR049383">
    <property type="entry name" value="UbiD-like_N"/>
</dbReference>
<dbReference type="InterPro" id="IPR023677">
    <property type="entry name" value="UbiD_bacteria"/>
</dbReference>
<dbReference type="InterPro" id="IPR048304">
    <property type="entry name" value="UbiD_Rift_dom"/>
</dbReference>
<dbReference type="NCBIfam" id="NF008175">
    <property type="entry name" value="PRK10922.1"/>
    <property type="match status" value="1"/>
</dbReference>
<dbReference type="NCBIfam" id="TIGR00148">
    <property type="entry name" value="UbiD family decarboxylase"/>
    <property type="match status" value="1"/>
</dbReference>
<dbReference type="PANTHER" id="PTHR30108">
    <property type="entry name" value="3-OCTAPRENYL-4-HYDROXYBENZOATE CARBOXY-LYASE-RELATED"/>
    <property type="match status" value="1"/>
</dbReference>
<dbReference type="PANTHER" id="PTHR30108:SF17">
    <property type="entry name" value="FERULIC ACID DECARBOXYLASE 1"/>
    <property type="match status" value="1"/>
</dbReference>
<dbReference type="Pfam" id="PF01977">
    <property type="entry name" value="UbiD"/>
    <property type="match status" value="1"/>
</dbReference>
<dbReference type="Pfam" id="PF20696">
    <property type="entry name" value="UbiD_C"/>
    <property type="match status" value="1"/>
</dbReference>
<dbReference type="Pfam" id="PF20695">
    <property type="entry name" value="UbiD_N"/>
    <property type="match status" value="1"/>
</dbReference>
<dbReference type="SUPFAM" id="SSF50475">
    <property type="entry name" value="FMN-binding split barrel"/>
    <property type="match status" value="1"/>
</dbReference>
<dbReference type="SUPFAM" id="SSF143968">
    <property type="entry name" value="UbiD C-terminal domain-like"/>
    <property type="match status" value="1"/>
</dbReference>
<name>UBID_AERHH</name>
<protein>
    <recommendedName>
        <fullName evidence="1">3-octaprenyl-4-hydroxybenzoate carboxy-lyase</fullName>
        <ecNumber evidence="1">4.1.1.98</ecNumber>
    </recommendedName>
    <alternativeName>
        <fullName evidence="1">Polyprenyl p-hydroxybenzoate decarboxylase</fullName>
    </alternativeName>
</protein>
<gene>
    <name evidence="1" type="primary">ubiD</name>
    <name type="ordered locus">AHA_0101</name>
</gene>
<sequence>MKYKDLRDFIAQLEQSGQLKRISREIDPYLEMTEISDRTLRAGGPALLFENPKGYTMPVLTNLFGTPDRVAMGMGQPNVAALRQVGIWLSYLKEPEPPRGFKELMEKLPIFKQVLNMPTKRLSSAPCQQRVLEGEAVDLDQIPIQHCWPGDVAPLVTWGLTITRGPYKKRQNLGIYRQQKIGKNKLIMRWLDHRGGAIDFREWQEAHPGERFPVVVALGADPATILGAVTPVPDTLSEYAFAGLLRGSRTEVVKAVSCDLEVPASAEIVLEGYLEPGEMAPEGPYGDHTGYYNEVDEFPVFTITHMTMRKDAIYHSTYTGRPPDEPAVLGVALNEVFVPLLQKQFPEIVDFYLPPEGCSYRMAVVTIKKRYPGHAKRVMLGVWSFLRQFMYTKFVIVCDDDINARDWKDVIWAITTRMDPARDTTLIEHTPIDYLDFASPVSGLGSKMGLDATNKWPGETNREWGQPIVQDEAVKQKIDALWDELNILG</sequence>
<reference key="1">
    <citation type="journal article" date="2006" name="J. Bacteriol.">
        <title>Genome sequence of Aeromonas hydrophila ATCC 7966T: jack of all trades.</title>
        <authorList>
            <person name="Seshadri R."/>
            <person name="Joseph S.W."/>
            <person name="Chopra A.K."/>
            <person name="Sha J."/>
            <person name="Shaw J."/>
            <person name="Graf J."/>
            <person name="Haft D.H."/>
            <person name="Wu M."/>
            <person name="Ren Q."/>
            <person name="Rosovitz M.J."/>
            <person name="Madupu R."/>
            <person name="Tallon L."/>
            <person name="Kim M."/>
            <person name="Jin S."/>
            <person name="Vuong H."/>
            <person name="Stine O.C."/>
            <person name="Ali A."/>
            <person name="Horneman A.J."/>
            <person name="Heidelberg J.F."/>
        </authorList>
    </citation>
    <scope>NUCLEOTIDE SEQUENCE [LARGE SCALE GENOMIC DNA]</scope>
    <source>
        <strain>ATCC 7966 / DSM 30187 / BCRC 13018 / CCUG 14551 / JCM 1027 / KCTC 2358 / NCIMB 9240 / NCTC 8049</strain>
    </source>
</reference>